<evidence type="ECO:0000255" key="1">
    <source>
        <dbReference type="HAMAP-Rule" id="MF_00161"/>
    </source>
</evidence>
<keyword id="KW-0064">Aspartyl protease</keyword>
<keyword id="KW-0997">Cell inner membrane</keyword>
<keyword id="KW-1003">Cell membrane</keyword>
<keyword id="KW-0378">Hydrolase</keyword>
<keyword id="KW-0472">Membrane</keyword>
<keyword id="KW-0645">Protease</keyword>
<keyword id="KW-0812">Transmembrane</keyword>
<keyword id="KW-1133">Transmembrane helix</keyword>
<sequence length="170" mass="19980">MSVKSKQYFNIFIFIISLIFFDQLSKYLVVKYVKLGSVYFSFFENFFRIIHVRNTGILFSIGSNINYSLKKIFFLAMPIFILIFIFSLSLKEKNRIARISLLLIFSGGVGNVIDRLFRPSGVVDFLDFKFYGIFGLDRWPTFNFADSYVVIGMILFLVYDFFIKRKAFNT</sequence>
<name>LSPA_BORAP</name>
<proteinExistence type="inferred from homology"/>
<dbReference type="EC" id="3.4.23.36" evidence="1"/>
<dbReference type="EMBL" id="CP000395">
    <property type="protein sequence ID" value="ABH01741.1"/>
    <property type="molecule type" value="Genomic_DNA"/>
</dbReference>
<dbReference type="EMBL" id="CP002933">
    <property type="protein sequence ID" value="AEL69695.1"/>
    <property type="molecule type" value="Genomic_DNA"/>
</dbReference>
<dbReference type="RefSeq" id="WP_004789374.1">
    <property type="nucleotide sequence ID" value="NZ_CP160066.1"/>
</dbReference>
<dbReference type="SMR" id="Q0SN37"/>
<dbReference type="STRING" id="29518.BLA32_01910"/>
<dbReference type="GeneID" id="77265317"/>
<dbReference type="KEGG" id="baf:BAPKO_0498"/>
<dbReference type="KEGG" id="bafz:BafPKo_0487"/>
<dbReference type="PATRIC" id="fig|390236.22.peg.466"/>
<dbReference type="eggNOG" id="COG0597">
    <property type="taxonomic scope" value="Bacteria"/>
</dbReference>
<dbReference type="HOGENOM" id="CLU_083252_3_1_12"/>
<dbReference type="OrthoDB" id="9810259at2"/>
<dbReference type="UniPathway" id="UPA00665"/>
<dbReference type="Proteomes" id="UP000005216">
    <property type="component" value="Chromosome"/>
</dbReference>
<dbReference type="GO" id="GO:0005886">
    <property type="term" value="C:plasma membrane"/>
    <property type="evidence" value="ECO:0007669"/>
    <property type="project" value="UniProtKB-SubCell"/>
</dbReference>
<dbReference type="GO" id="GO:0004190">
    <property type="term" value="F:aspartic-type endopeptidase activity"/>
    <property type="evidence" value="ECO:0007669"/>
    <property type="project" value="UniProtKB-UniRule"/>
</dbReference>
<dbReference type="GO" id="GO:0006508">
    <property type="term" value="P:proteolysis"/>
    <property type="evidence" value="ECO:0007669"/>
    <property type="project" value="UniProtKB-KW"/>
</dbReference>
<dbReference type="HAMAP" id="MF_00161">
    <property type="entry name" value="LspA"/>
    <property type="match status" value="1"/>
</dbReference>
<dbReference type="InterPro" id="IPR001872">
    <property type="entry name" value="Peptidase_A8"/>
</dbReference>
<dbReference type="NCBIfam" id="TIGR00077">
    <property type="entry name" value="lspA"/>
    <property type="match status" value="1"/>
</dbReference>
<dbReference type="PANTHER" id="PTHR33695">
    <property type="entry name" value="LIPOPROTEIN SIGNAL PEPTIDASE"/>
    <property type="match status" value="1"/>
</dbReference>
<dbReference type="PANTHER" id="PTHR33695:SF1">
    <property type="entry name" value="LIPOPROTEIN SIGNAL PEPTIDASE"/>
    <property type="match status" value="1"/>
</dbReference>
<dbReference type="Pfam" id="PF01252">
    <property type="entry name" value="Peptidase_A8"/>
    <property type="match status" value="1"/>
</dbReference>
<dbReference type="PRINTS" id="PR00781">
    <property type="entry name" value="LIPOSIGPTASE"/>
</dbReference>
<dbReference type="PROSITE" id="PS00855">
    <property type="entry name" value="SPASE_II"/>
    <property type="match status" value="1"/>
</dbReference>
<gene>
    <name evidence="1" type="primary">lspA</name>
    <name type="ordered locus">BAPKO_0498</name>
    <name type="ordered locus">BafPKo_0487</name>
</gene>
<comment type="function">
    <text evidence="1">This protein specifically catalyzes the removal of signal peptides from prolipoproteins.</text>
</comment>
<comment type="catalytic activity">
    <reaction evidence="1">
        <text>Release of signal peptides from bacterial membrane prolipoproteins. Hydrolyzes -Xaa-Yaa-Zaa-|-(S,diacylglyceryl)Cys-, in which Xaa is hydrophobic (preferably Leu), and Yaa (Ala or Ser) and Zaa (Gly or Ala) have small, neutral side chains.</text>
        <dbReference type="EC" id="3.4.23.36"/>
    </reaction>
</comment>
<comment type="pathway">
    <text evidence="1">Protein modification; lipoprotein biosynthesis (signal peptide cleavage).</text>
</comment>
<comment type="subcellular location">
    <subcellularLocation>
        <location evidence="1">Cell inner membrane</location>
        <topology evidence="1">Multi-pass membrane protein</topology>
    </subcellularLocation>
</comment>
<comment type="similarity">
    <text evidence="1">Belongs to the peptidase A8 family.</text>
</comment>
<feature type="chain" id="PRO_0000289355" description="Lipoprotein signal peptidase">
    <location>
        <begin position="1"/>
        <end position="170"/>
    </location>
</feature>
<feature type="transmembrane region" description="Helical" evidence="1">
    <location>
        <begin position="9"/>
        <end position="29"/>
    </location>
</feature>
<feature type="transmembrane region" description="Helical" evidence="1">
    <location>
        <begin position="72"/>
        <end position="92"/>
    </location>
</feature>
<feature type="transmembrane region" description="Helical" evidence="1">
    <location>
        <begin position="96"/>
        <end position="118"/>
    </location>
</feature>
<feature type="transmembrane region" description="Helical" evidence="1">
    <location>
        <begin position="143"/>
        <end position="163"/>
    </location>
</feature>
<feature type="active site" evidence="1">
    <location>
        <position position="124"/>
    </location>
</feature>
<feature type="active site" evidence="1">
    <location>
        <position position="146"/>
    </location>
</feature>
<organism>
    <name type="scientific">Borreliella afzelii (strain PKo)</name>
    <name type="common">Borrelia afzelii</name>
    <dbReference type="NCBI Taxonomy" id="390236"/>
    <lineage>
        <taxon>Bacteria</taxon>
        <taxon>Pseudomonadati</taxon>
        <taxon>Spirochaetota</taxon>
        <taxon>Spirochaetia</taxon>
        <taxon>Spirochaetales</taxon>
        <taxon>Borreliaceae</taxon>
        <taxon>Borreliella</taxon>
    </lineage>
</organism>
<accession>Q0SN37</accession>
<accession>G0ISB4</accession>
<protein>
    <recommendedName>
        <fullName evidence="1">Lipoprotein signal peptidase</fullName>
        <ecNumber evidence="1">3.4.23.36</ecNumber>
    </recommendedName>
    <alternativeName>
        <fullName evidence="1">Prolipoprotein signal peptidase</fullName>
    </alternativeName>
    <alternativeName>
        <fullName evidence="1">Signal peptidase II</fullName>
        <shortName evidence="1">SPase II</shortName>
    </alternativeName>
</protein>
<reference key="1">
    <citation type="journal article" date="2006" name="BMC Genomics">
        <title>Comparative genome analysis: selection pressure on the Borrelia vls cassettes is essential for infectivity.</title>
        <authorList>
            <person name="Gloeckner G."/>
            <person name="Schulte-Spechtel U."/>
            <person name="Schilhabel M."/>
            <person name="Felder M."/>
            <person name="Suehnel J."/>
            <person name="Wilske B."/>
            <person name="Platzer M."/>
        </authorList>
    </citation>
    <scope>NUCLEOTIDE SEQUENCE [LARGE SCALE GENOMIC DNA]</scope>
    <source>
        <strain>PKo</strain>
    </source>
</reference>
<reference key="2">
    <citation type="journal article" date="2011" name="J. Bacteriol.">
        <title>Whole-genome sequences of two Borrelia afzelii and two Borrelia garinii Lyme disease agent isolates.</title>
        <authorList>
            <person name="Casjens S.R."/>
            <person name="Mongodin E.F."/>
            <person name="Qiu W.G."/>
            <person name="Dunn J.J."/>
            <person name="Luft B.J."/>
            <person name="Fraser-Liggett C.M."/>
            <person name="Schutzer S.E."/>
        </authorList>
    </citation>
    <scope>NUCLEOTIDE SEQUENCE [LARGE SCALE GENOMIC DNA]</scope>
    <source>
        <strain>PKo</strain>
    </source>
</reference>